<proteinExistence type="inferred from homology"/>
<name>RK14_IPOPU</name>
<keyword id="KW-0150">Chloroplast</keyword>
<keyword id="KW-0934">Plastid</keyword>
<keyword id="KW-0687">Ribonucleoprotein</keyword>
<keyword id="KW-0689">Ribosomal protein</keyword>
<keyword id="KW-0694">RNA-binding</keyword>
<keyword id="KW-0699">rRNA-binding</keyword>
<gene>
    <name evidence="1" type="primary">rpl14</name>
</gene>
<accession>A7Y3I6</accession>
<comment type="function">
    <text evidence="1">Binds to 23S rRNA.</text>
</comment>
<comment type="subunit">
    <text evidence="1">Part of the 50S ribosomal subunit.</text>
</comment>
<comment type="subcellular location">
    <subcellularLocation>
        <location>Plastid</location>
        <location>Chloroplast</location>
    </subcellularLocation>
</comment>
<comment type="similarity">
    <text evidence="1">Belongs to the universal ribosomal protein uL14 family.</text>
</comment>
<organism>
    <name type="scientific">Ipomoea purpurea</name>
    <name type="common">Common morning glory</name>
    <name type="synonym">Pharbitis purpurea</name>
    <dbReference type="NCBI Taxonomy" id="4121"/>
    <lineage>
        <taxon>Eukaryota</taxon>
        <taxon>Viridiplantae</taxon>
        <taxon>Streptophyta</taxon>
        <taxon>Embryophyta</taxon>
        <taxon>Tracheophyta</taxon>
        <taxon>Spermatophyta</taxon>
        <taxon>Magnoliopsida</taxon>
        <taxon>eudicotyledons</taxon>
        <taxon>Gunneridae</taxon>
        <taxon>Pentapetalae</taxon>
        <taxon>asterids</taxon>
        <taxon>lamiids</taxon>
        <taxon>Solanales</taxon>
        <taxon>Convolvulaceae</taxon>
        <taxon>Ipomoeeae</taxon>
        <taxon>Ipomoea</taxon>
    </lineage>
</organism>
<dbReference type="EMBL" id="EU118126">
    <property type="protein sequence ID" value="ABV02384.1"/>
    <property type="molecule type" value="Genomic_DNA"/>
</dbReference>
<dbReference type="RefSeq" id="YP_001468344.1">
    <property type="nucleotide sequence ID" value="NC_009808.1"/>
</dbReference>
<dbReference type="SMR" id="A7Y3I6"/>
<dbReference type="GeneID" id="5601323"/>
<dbReference type="GO" id="GO:0009507">
    <property type="term" value="C:chloroplast"/>
    <property type="evidence" value="ECO:0007669"/>
    <property type="project" value="UniProtKB-SubCell"/>
</dbReference>
<dbReference type="GO" id="GO:0022625">
    <property type="term" value="C:cytosolic large ribosomal subunit"/>
    <property type="evidence" value="ECO:0007669"/>
    <property type="project" value="TreeGrafter"/>
</dbReference>
<dbReference type="GO" id="GO:0070180">
    <property type="term" value="F:large ribosomal subunit rRNA binding"/>
    <property type="evidence" value="ECO:0007669"/>
    <property type="project" value="TreeGrafter"/>
</dbReference>
<dbReference type="GO" id="GO:0003735">
    <property type="term" value="F:structural constituent of ribosome"/>
    <property type="evidence" value="ECO:0007669"/>
    <property type="project" value="InterPro"/>
</dbReference>
<dbReference type="GO" id="GO:0006412">
    <property type="term" value="P:translation"/>
    <property type="evidence" value="ECO:0007669"/>
    <property type="project" value="UniProtKB-UniRule"/>
</dbReference>
<dbReference type="CDD" id="cd00337">
    <property type="entry name" value="Ribosomal_uL14"/>
    <property type="match status" value="1"/>
</dbReference>
<dbReference type="FunFam" id="2.40.150.20:FF:000002">
    <property type="entry name" value="50S ribosomal protein L14, chloroplastic"/>
    <property type="match status" value="1"/>
</dbReference>
<dbReference type="Gene3D" id="2.40.150.20">
    <property type="entry name" value="Ribosomal protein L14"/>
    <property type="match status" value="1"/>
</dbReference>
<dbReference type="HAMAP" id="MF_01367">
    <property type="entry name" value="Ribosomal_uL14"/>
    <property type="match status" value="1"/>
</dbReference>
<dbReference type="InterPro" id="IPR000218">
    <property type="entry name" value="Ribosomal_uL14"/>
</dbReference>
<dbReference type="InterPro" id="IPR005745">
    <property type="entry name" value="Ribosomal_uL14_bac-type"/>
</dbReference>
<dbReference type="InterPro" id="IPR019972">
    <property type="entry name" value="Ribosomal_uL14_CS"/>
</dbReference>
<dbReference type="InterPro" id="IPR036853">
    <property type="entry name" value="Ribosomal_uL14_sf"/>
</dbReference>
<dbReference type="NCBIfam" id="TIGR01067">
    <property type="entry name" value="rplN_bact"/>
    <property type="match status" value="1"/>
</dbReference>
<dbReference type="PANTHER" id="PTHR11761">
    <property type="entry name" value="50S/60S RIBOSOMAL PROTEIN L14/L23"/>
    <property type="match status" value="1"/>
</dbReference>
<dbReference type="PANTHER" id="PTHR11761:SF3">
    <property type="entry name" value="LARGE RIBOSOMAL SUBUNIT PROTEIN UL14M"/>
    <property type="match status" value="1"/>
</dbReference>
<dbReference type="Pfam" id="PF00238">
    <property type="entry name" value="Ribosomal_L14"/>
    <property type="match status" value="1"/>
</dbReference>
<dbReference type="SMART" id="SM01374">
    <property type="entry name" value="Ribosomal_L14"/>
    <property type="match status" value="1"/>
</dbReference>
<dbReference type="SUPFAM" id="SSF50193">
    <property type="entry name" value="Ribosomal protein L14"/>
    <property type="match status" value="1"/>
</dbReference>
<dbReference type="PROSITE" id="PS00049">
    <property type="entry name" value="RIBOSOMAL_L14"/>
    <property type="match status" value="1"/>
</dbReference>
<evidence type="ECO:0000255" key="1">
    <source>
        <dbReference type="HAMAP-Rule" id="MF_01367"/>
    </source>
</evidence>
<evidence type="ECO:0000305" key="2"/>
<reference key="1">
    <citation type="journal article" date="2007" name="BMC Plant Biol.">
        <title>Complete plastid genome sequences suggest strong selection for retention of photosynthetic genes in the parasitic plant genus Cuscuta.</title>
        <authorList>
            <person name="McNeal J.R."/>
            <person name="Kuehl J.V."/>
            <person name="Boore J.L."/>
            <person name="dePamphilis C.W."/>
        </authorList>
    </citation>
    <scope>NUCLEOTIDE SEQUENCE [LARGE SCALE GENOMIC DNA]</scope>
</reference>
<sequence length="122" mass="13625">MIQPQTHLNVADNSGARELMCIRIIGASNRRYAHIGDIIVAVIKEAVPNMPLERSEVVRAVIVRTCKELKRDNGMIIRYDDNAAVVIDKEGNPKGTRIFGAIARELRQFNFTKIVSLAPEVL</sequence>
<geneLocation type="chloroplast"/>
<protein>
    <recommendedName>
        <fullName evidence="1">Large ribosomal subunit protein uL14c</fullName>
    </recommendedName>
    <alternativeName>
        <fullName evidence="2">50S ribosomal protein L14, chloroplastic</fullName>
    </alternativeName>
</protein>
<feature type="chain" id="PRO_0000355884" description="Large ribosomal subunit protein uL14c">
    <location>
        <begin position="1"/>
        <end position="122"/>
    </location>
</feature>